<comment type="function">
    <text evidence="4 5 6 7">FAD-binding monooxygenase; part of the gene cluster A that mediates the biosynthesis of austinol and dehydroaustinol, two fungal meroterpenoids (PubMed:22329759). The first step of the pathway is the synthesis of 3,5-dimethylorsellinic acid by the polyketide synthase ausA (PubMed:22329759). 3,5-dimethylorsellinic acid is then prenylated by the polyprenyl transferase ausN (PubMed:22329759). Further epoxidation by the FAD-dependent monooxygenase ausM and cyclization by the probable terpene cyclase ausL lead to the formation of protoaustinoid A (PubMed:22329759). Protoaustinoid A is then oxidized to spiro-lactone preaustinoid A3 by the combined action of the FAD-binding monooxygenases ausB and ausC, and the dioxygenase ausE (PubMed:22329759, PubMed:23865690). Acid-catalyzed keto-rearrangement and ring contraction of the tetraketide portion of preaustinoid A3 by ausJ lead to the formation of preaustinoid A4 (PubMed:22329759). The aldo-keto reductase ausK, with the help of ausH, is involved in the next step by transforming preaustinoid A4 into isoaustinone which is in turn hydroxylated by the P450 monooxygenase ausI to form austinolide (PubMed:22329759). Finally, the cytochrome P450 monooxygenase ausG modifies austinolide to austinol (PubMed:22329759). Austinol can be further modified to dehydroaustinol which forms a diffusible complex with diorcinol that initiates conidiation (PubMed:22234162, PubMed:22329759). Due to genetic rearrangements of the clusters and the subsequent loss of some enzymes, the end products of the Emericella nidulans austinoid biosynthesis clusters are austinol and dehydroaustinol, even if additional enzymes, such as the O-acetyltransferase ausQ and the cytochrome P450 monooxygenase ausR are still functional (PubMed:29076725).</text>
</comment>
<comment type="catalytic activity">
    <reaction evidence="6">
        <text>protoaustinoid A + AH2 + O2 = berkeleyone A + A + H2O</text>
        <dbReference type="Rhea" id="RHEA:65140"/>
        <dbReference type="ChEBI" id="CHEBI:13193"/>
        <dbReference type="ChEBI" id="CHEBI:15377"/>
        <dbReference type="ChEBI" id="CHEBI:15379"/>
        <dbReference type="ChEBI" id="CHEBI:17499"/>
        <dbReference type="ChEBI" id="CHEBI:69024"/>
        <dbReference type="ChEBI" id="CHEBI:156350"/>
    </reaction>
    <physiologicalReaction direction="left-to-right" evidence="6">
        <dbReference type="Rhea" id="RHEA:65141"/>
    </physiologicalReaction>
</comment>
<comment type="cofactor">
    <cofactor evidence="1">
        <name>FAD</name>
        <dbReference type="ChEBI" id="CHEBI:57692"/>
    </cofactor>
    <text evidence="1">Binds 1 FAD per subunit.</text>
</comment>
<comment type="pathway">
    <text evidence="5">Secondary metabolite biosynthesis; terpenoid biosynthesis.</text>
</comment>
<comment type="subcellular location">
    <subcellularLocation>
        <location evidence="2">Membrane</location>
        <topology evidence="2">Single-pass membrane protein</topology>
    </subcellularLocation>
</comment>
<comment type="disruption phenotype">
    <text evidence="5">Impairs the synthesis of austinol and dehydroaustinol and accumulates the intermediate compound protoaustinoid A (PubMed:22329759).</text>
</comment>
<comment type="miscellaneous">
    <text evidence="10">In A.calidoustus, the austinoid gene cluster lies on a contiguous DNA region, while clusters from E.nidulans and P.brasilianum are split in their respective genomes. Genetic rearrangements provoked variability among the clusters and E.nidulans produces the least number of austionoid derivatives with the end products austinol and dehydroaustinol, while P.brasilianum can produce until acetoxydehydroaustin, and A.calidoustus produces the highest number of identified derivatives.</text>
</comment>
<comment type="similarity">
    <text evidence="9">Belongs to the FAD-binding monooxygenase family.</text>
</comment>
<feature type="chain" id="PRO_0000436483" description="FAD-binding monooxygenase ausB">
    <location>
        <begin position="1"/>
        <end position="745"/>
    </location>
</feature>
<feature type="transmembrane region" description="Helical" evidence="2">
    <location>
        <begin position="174"/>
        <end position="194"/>
    </location>
</feature>
<feature type="binding site" evidence="1">
    <location>
        <begin position="212"/>
        <end position="215"/>
    </location>
    <ligand>
        <name>FAD</name>
        <dbReference type="ChEBI" id="CHEBI:57692"/>
    </ligand>
</feature>
<feature type="binding site" evidence="1">
    <location>
        <begin position="222"/>
        <end position="224"/>
    </location>
    <ligand>
        <name>NADP(+)</name>
        <dbReference type="ChEBI" id="CHEBI:58349"/>
    </ligand>
</feature>
<feature type="binding site" evidence="1">
    <location>
        <begin position="224"/>
        <end position="225"/>
    </location>
    <ligand>
        <name>FAD</name>
        <dbReference type="ChEBI" id="CHEBI:57692"/>
    </ligand>
</feature>
<feature type="binding site" evidence="1">
    <location>
        <position position="230"/>
    </location>
    <ligand>
        <name>FAD</name>
        <dbReference type="ChEBI" id="CHEBI:57692"/>
    </ligand>
</feature>
<feature type="binding site" evidence="1">
    <location>
        <begin position="375"/>
        <end position="381"/>
    </location>
    <ligand>
        <name>NADP(+)</name>
        <dbReference type="ChEBI" id="CHEBI:58349"/>
    </ligand>
</feature>
<feature type="binding site" evidence="1">
    <location>
        <begin position="398"/>
        <end position="399"/>
    </location>
    <ligand>
        <name>NADP(+)</name>
        <dbReference type="ChEBI" id="CHEBI:58349"/>
    </ligand>
</feature>
<feature type="site" description="Transition state stabilizer" evidence="1">
    <location>
        <position position="517"/>
    </location>
</feature>
<feature type="glycosylation site" description="N-linked (GlcNAc...) asparagine" evidence="3">
    <location>
        <position position="65"/>
    </location>
</feature>
<feature type="glycosylation site" description="N-linked (GlcNAc...) asparagine" evidence="3">
    <location>
        <position position="627"/>
    </location>
</feature>
<feature type="glycosylation site" description="N-linked (GlcNAc...) asparagine" evidence="3">
    <location>
        <position position="645"/>
    </location>
</feature>
<keyword id="KW-0274">FAD</keyword>
<keyword id="KW-0285">Flavoprotein</keyword>
<keyword id="KW-0325">Glycoprotein</keyword>
<keyword id="KW-0472">Membrane</keyword>
<keyword id="KW-0503">Monooxygenase</keyword>
<keyword id="KW-0521">NADP</keyword>
<keyword id="KW-0560">Oxidoreductase</keyword>
<keyword id="KW-1185">Reference proteome</keyword>
<keyword id="KW-0812">Transmembrane</keyword>
<keyword id="KW-1133">Transmembrane helix</keyword>
<reference key="1">
    <citation type="journal article" date="2005" name="Nature">
        <title>Sequencing of Aspergillus nidulans and comparative analysis with A. fumigatus and A. oryzae.</title>
        <authorList>
            <person name="Galagan J.E."/>
            <person name="Calvo S.E."/>
            <person name="Cuomo C."/>
            <person name="Ma L.-J."/>
            <person name="Wortman J.R."/>
            <person name="Batzoglou S."/>
            <person name="Lee S.-I."/>
            <person name="Bastuerkmen M."/>
            <person name="Spevak C.C."/>
            <person name="Clutterbuck J."/>
            <person name="Kapitonov V."/>
            <person name="Jurka J."/>
            <person name="Scazzocchio C."/>
            <person name="Farman M.L."/>
            <person name="Butler J."/>
            <person name="Purcell S."/>
            <person name="Harris S."/>
            <person name="Braus G.H."/>
            <person name="Draht O."/>
            <person name="Busch S."/>
            <person name="D'Enfert C."/>
            <person name="Bouchier C."/>
            <person name="Goldman G.H."/>
            <person name="Bell-Pedersen D."/>
            <person name="Griffiths-Jones S."/>
            <person name="Doonan J.H."/>
            <person name="Yu J."/>
            <person name="Vienken K."/>
            <person name="Pain A."/>
            <person name="Freitag M."/>
            <person name="Selker E.U."/>
            <person name="Archer D.B."/>
            <person name="Penalva M.A."/>
            <person name="Oakley B.R."/>
            <person name="Momany M."/>
            <person name="Tanaka T."/>
            <person name="Kumagai T."/>
            <person name="Asai K."/>
            <person name="Machida M."/>
            <person name="Nierman W.C."/>
            <person name="Denning D.W."/>
            <person name="Caddick M.X."/>
            <person name="Hynes M."/>
            <person name="Paoletti M."/>
            <person name="Fischer R."/>
            <person name="Miller B.L."/>
            <person name="Dyer P.S."/>
            <person name="Sachs M.S."/>
            <person name="Osmani S.A."/>
            <person name="Birren B.W."/>
        </authorList>
    </citation>
    <scope>NUCLEOTIDE SEQUENCE [LARGE SCALE GENOMIC DNA]</scope>
    <source>
        <strain>FGSC A4 / ATCC 38163 / CBS 112.46 / NRRL 194 / M139</strain>
    </source>
</reference>
<reference key="2">
    <citation type="journal article" date="2009" name="Fungal Genet. Biol.">
        <title>The 2008 update of the Aspergillus nidulans genome annotation: a community effort.</title>
        <authorList>
            <person name="Wortman J.R."/>
            <person name="Gilsenan J.M."/>
            <person name="Joardar V."/>
            <person name="Deegan J."/>
            <person name="Clutterbuck J."/>
            <person name="Andersen M.R."/>
            <person name="Archer D."/>
            <person name="Bencina M."/>
            <person name="Braus G."/>
            <person name="Coutinho P."/>
            <person name="von Dohren H."/>
            <person name="Doonan J."/>
            <person name="Driessen A.J."/>
            <person name="Durek P."/>
            <person name="Espeso E."/>
            <person name="Fekete E."/>
            <person name="Flipphi M."/>
            <person name="Estrada C.G."/>
            <person name="Geysens S."/>
            <person name="Goldman G."/>
            <person name="de Groot P.W."/>
            <person name="Hansen K."/>
            <person name="Harris S.D."/>
            <person name="Heinekamp T."/>
            <person name="Helmstaedt K."/>
            <person name="Henrissat B."/>
            <person name="Hofmann G."/>
            <person name="Homan T."/>
            <person name="Horio T."/>
            <person name="Horiuchi H."/>
            <person name="James S."/>
            <person name="Jones M."/>
            <person name="Karaffa L."/>
            <person name="Karanyi Z."/>
            <person name="Kato M."/>
            <person name="Keller N."/>
            <person name="Kelly D.E."/>
            <person name="Kiel J.A."/>
            <person name="Kim J.M."/>
            <person name="van der Klei I.J."/>
            <person name="Klis F.M."/>
            <person name="Kovalchuk A."/>
            <person name="Krasevec N."/>
            <person name="Kubicek C.P."/>
            <person name="Liu B."/>
            <person name="Maccabe A."/>
            <person name="Meyer V."/>
            <person name="Mirabito P."/>
            <person name="Miskei M."/>
            <person name="Mos M."/>
            <person name="Mullins J."/>
            <person name="Nelson D.R."/>
            <person name="Nielsen J."/>
            <person name="Oakley B.R."/>
            <person name="Osmani S.A."/>
            <person name="Pakula T."/>
            <person name="Paszewski A."/>
            <person name="Paulsen I."/>
            <person name="Pilsyk S."/>
            <person name="Pocsi I."/>
            <person name="Punt P.J."/>
            <person name="Ram A.F."/>
            <person name="Ren Q."/>
            <person name="Robellet X."/>
            <person name="Robson G."/>
            <person name="Seiboth B."/>
            <person name="van Solingen P."/>
            <person name="Specht T."/>
            <person name="Sun J."/>
            <person name="Taheri-Talesh N."/>
            <person name="Takeshita N."/>
            <person name="Ussery D."/>
            <person name="vanKuyk P.A."/>
            <person name="Visser H."/>
            <person name="van de Vondervoort P.J."/>
            <person name="de Vries R.P."/>
            <person name="Walton J."/>
            <person name="Xiang X."/>
            <person name="Xiong Y."/>
            <person name="Zeng A.P."/>
            <person name="Brandt B.W."/>
            <person name="Cornell M.J."/>
            <person name="van den Hondel C.A."/>
            <person name="Visser J."/>
            <person name="Oliver S.G."/>
            <person name="Turner G."/>
        </authorList>
    </citation>
    <scope>GENOME REANNOTATION</scope>
    <source>
        <strain>FGSC A4 / ATCC 38163 / CBS 112.46 / NRRL 194 / M139</strain>
    </source>
</reference>
<reference key="3">
    <citation type="journal article" date="2012" name="ACS Chem. Biol.">
        <title>Signaling the induction of sporulation involves the interaction of two secondary metabolites in Aspergillus nidulans.</title>
        <authorList>
            <person name="Rodriguez-Urra A.B."/>
            <person name="Jimenez C."/>
            <person name="Nieto M.I."/>
            <person name="Rodriguez J."/>
            <person name="Hayashi H."/>
            <person name="Ugalde U."/>
        </authorList>
    </citation>
    <scope>FUNCTION</scope>
</reference>
<reference key="4">
    <citation type="journal article" date="2012" name="J. Am. Chem. Soc.">
        <title>Two separate gene clusters encode the biosynthetic pathway for the meroterpenoids austinol and dehydroaustinol in Aspergillus nidulans.</title>
        <authorList>
            <person name="Lo H.C."/>
            <person name="Entwistle R."/>
            <person name="Guo C.J."/>
            <person name="Ahuja M."/>
            <person name="Szewczyk E."/>
            <person name="Hung J.H."/>
            <person name="Chiang Y.M."/>
            <person name="Oakley B.R."/>
            <person name="Wang C.C."/>
        </authorList>
    </citation>
    <scope>FUNCTION</scope>
    <scope>DISRUPTION PHENOTYPE</scope>
</reference>
<reference key="5">
    <citation type="journal article" date="2013" name="J. Am. Chem. Soc.">
        <title>Spiro-ring formation is catalyzed by a multifunctional dioxygenase in austinol biosynthesis.</title>
        <authorList>
            <person name="Matsuda Y."/>
            <person name="Awakawa T."/>
            <person name="Wakimoto T."/>
            <person name="Abe I."/>
        </authorList>
    </citation>
    <scope>FUNCTION</scope>
    <scope>CATALYTIC ACTIVITY</scope>
</reference>
<reference key="6">
    <citation type="journal article" date="2017" name="ACS Chem. Biol.">
        <title>Rewiring of the austinoid biosynthetic pathway in filamentous fungi.</title>
        <authorList>
            <person name="Mattern D.J."/>
            <person name="Valiante V."/>
            <person name="Horn F."/>
            <person name="Petzke L."/>
            <person name="Brakhage A.A."/>
        </authorList>
    </citation>
    <scope>FUNCTION</scope>
</reference>
<sequence>MAKLYYMPYIFNEGMPLASGPPTLPEDFTPEKSGFRVLVEVRRMKGHFPAQKWRKRNQEWQCINNETLLPDHVRNGHLAKNVPYRPYRPVYVPFAMTVSPTTDAMGTSEETRSKQTKGSNDDILSAKIAGRVARPVYHCTSARLHDLAYDPWPITTIDTHGLSSLKAPSTHTRILIIGAGFGGLLFAVRLLQAGFSRDDLLLVDSAGGFGGTWYWNRYPGLMCDIESYIYMPLLEETGHMPSRKYVPGEELRTHAEGIAAKWELEQRALFRTTIRTLEWDEGGNQWIAHAEQLGVFTDAKQGGNGGGGPLTFTATFAIIASGTLSKPKVPNLHGVDDFQGHIFHTARWDYDYTGGSPANPAMHRLQGKRVGVIGTGSTAVQVIPQLARWSKELIVFQRTPAAVGLQKNQVTDPVWWKGNILKAGSGWQRKRSENFNAFISISNPPCMENLVNDGWTSSPSFSAAIGGALNMQPDFLDLVKAIDRPRLEAAQDHIRSTVRDDTTAEALINLNHGWCKRPCFHQGYFETYNLPHVRLIKTDAAGVTGLSPKGILVGDTLYEVDLVVLATGYDLGSLCPADRAQIQVLGSEGVAMKEKWAGGPTTLHGVMTRGFPNLFFPGTSQAGVTANQSYMFDRAAEHVAYIIQNSTLEAGGYIDKIRIEPTAEGEKHWTTQSVARISAFAATTACGTGDYTISNRYRSSDVDTMARHMPWGEGMASYVKILEAWRESGTMEGLDIRYHSSEGSR</sequence>
<dbReference type="EC" id="1.14.13.-" evidence="6"/>
<dbReference type="EMBL" id="BN001305">
    <property type="protein sequence ID" value="CBF80421.1"/>
    <property type="molecule type" value="Genomic_DNA"/>
</dbReference>
<dbReference type="EMBL" id="AACD01000152">
    <property type="protein sequence ID" value="EAA66899.1"/>
    <property type="molecule type" value="Genomic_DNA"/>
</dbReference>
<dbReference type="RefSeq" id="XP_681648.1">
    <property type="nucleotide sequence ID" value="XM_676556.1"/>
</dbReference>
<dbReference type="SMR" id="Q5ATK1"/>
<dbReference type="STRING" id="227321.Q5ATK1"/>
<dbReference type="GlyCosmos" id="Q5ATK1">
    <property type="glycosylation" value="3 sites, No reported glycans"/>
</dbReference>
<dbReference type="EnsemblFungi" id="CBF80421">
    <property type="protein sequence ID" value="CBF80421"/>
    <property type="gene ID" value="ANIA_08379"/>
</dbReference>
<dbReference type="KEGG" id="ani:ANIA_08379"/>
<dbReference type="eggNOG" id="ENOG502SHCE">
    <property type="taxonomic scope" value="Eukaryota"/>
</dbReference>
<dbReference type="HOGENOM" id="CLU_006937_8_2_1"/>
<dbReference type="InParanoid" id="Q5ATK1"/>
<dbReference type="OMA" id="TANQSYM"/>
<dbReference type="OrthoDB" id="66881at2759"/>
<dbReference type="UniPathway" id="UPA00213"/>
<dbReference type="Proteomes" id="UP000000560">
    <property type="component" value="Chromosome V"/>
</dbReference>
<dbReference type="GO" id="GO:0016020">
    <property type="term" value="C:membrane"/>
    <property type="evidence" value="ECO:0007669"/>
    <property type="project" value="UniProtKB-SubCell"/>
</dbReference>
<dbReference type="GO" id="GO:0004497">
    <property type="term" value="F:monooxygenase activity"/>
    <property type="evidence" value="ECO:0007669"/>
    <property type="project" value="UniProtKB-KW"/>
</dbReference>
<dbReference type="GO" id="GO:1900563">
    <property type="term" value="P:dehydroaustinol biosynthetic process"/>
    <property type="evidence" value="ECO:0000314"/>
    <property type="project" value="GO_Central"/>
</dbReference>
<dbReference type="GO" id="GO:0016114">
    <property type="term" value="P:terpenoid biosynthetic process"/>
    <property type="evidence" value="ECO:0007669"/>
    <property type="project" value="UniProtKB-UniPathway"/>
</dbReference>
<dbReference type="Gene3D" id="3.50.50.60">
    <property type="entry name" value="FAD/NAD(P)-binding domain"/>
    <property type="match status" value="3"/>
</dbReference>
<dbReference type="InterPro" id="IPR050775">
    <property type="entry name" value="FAD-binding_Monooxygenases"/>
</dbReference>
<dbReference type="InterPro" id="IPR036188">
    <property type="entry name" value="FAD/NAD-bd_sf"/>
</dbReference>
<dbReference type="PANTHER" id="PTHR43098:SF2">
    <property type="entry name" value="FAD-BINDING MONOOXYGENASE AUSB-RELATED"/>
    <property type="match status" value="1"/>
</dbReference>
<dbReference type="PANTHER" id="PTHR43098">
    <property type="entry name" value="L-ORNITHINE N(5)-MONOOXYGENASE-RELATED"/>
    <property type="match status" value="1"/>
</dbReference>
<dbReference type="Pfam" id="PF13450">
    <property type="entry name" value="NAD_binding_8"/>
    <property type="match status" value="1"/>
</dbReference>
<dbReference type="SUPFAM" id="SSF51905">
    <property type="entry name" value="FAD/NAD(P)-binding domain"/>
    <property type="match status" value="2"/>
</dbReference>
<organism>
    <name type="scientific">Emericella nidulans (strain FGSC A4 / ATCC 38163 / CBS 112.46 / NRRL 194 / M139)</name>
    <name type="common">Aspergillus nidulans</name>
    <dbReference type="NCBI Taxonomy" id="227321"/>
    <lineage>
        <taxon>Eukaryota</taxon>
        <taxon>Fungi</taxon>
        <taxon>Dikarya</taxon>
        <taxon>Ascomycota</taxon>
        <taxon>Pezizomycotina</taxon>
        <taxon>Eurotiomycetes</taxon>
        <taxon>Eurotiomycetidae</taxon>
        <taxon>Eurotiales</taxon>
        <taxon>Aspergillaceae</taxon>
        <taxon>Aspergillus</taxon>
        <taxon>Aspergillus subgen. Nidulantes</taxon>
    </lineage>
</organism>
<name>AUSB_EMENI</name>
<gene>
    <name evidence="8" type="primary">ausB</name>
    <name type="ORF">AN8379</name>
</gene>
<proteinExistence type="evidence at protein level"/>
<evidence type="ECO:0000250" key="1">
    <source>
        <dbReference type="UniProtKB" id="H3JQW0"/>
    </source>
</evidence>
<evidence type="ECO:0000255" key="2"/>
<evidence type="ECO:0000255" key="3">
    <source>
        <dbReference type="PROSITE-ProRule" id="PRU00498"/>
    </source>
</evidence>
<evidence type="ECO:0000269" key="4">
    <source>
    </source>
</evidence>
<evidence type="ECO:0000269" key="5">
    <source>
    </source>
</evidence>
<evidence type="ECO:0000269" key="6">
    <source>
    </source>
</evidence>
<evidence type="ECO:0000269" key="7">
    <source>
    </source>
</evidence>
<evidence type="ECO:0000303" key="8">
    <source>
    </source>
</evidence>
<evidence type="ECO:0000305" key="9"/>
<evidence type="ECO:0000305" key="10">
    <source>
    </source>
</evidence>
<accession>Q5ATK1</accession>
<accession>C8VE77</accession>
<protein>
    <recommendedName>
        <fullName evidence="9">FAD-binding monooxygenase ausB</fullName>
        <ecNumber evidence="6">1.14.13.-</ecNumber>
    </recommendedName>
    <alternativeName>
        <fullName evidence="8">Austinoid biosynthesis clusters protein B</fullName>
    </alternativeName>
</protein>